<feature type="chain" id="PRO_1000090652" description="Phospho-N-acetylmuramoyl-pentapeptide-transferase">
    <location>
        <begin position="1"/>
        <end position="363"/>
    </location>
</feature>
<feature type="transmembrane region" description="Helical" evidence="1">
    <location>
        <begin position="4"/>
        <end position="24"/>
    </location>
</feature>
<feature type="transmembrane region" description="Helical" evidence="1">
    <location>
        <begin position="28"/>
        <end position="48"/>
    </location>
</feature>
<feature type="transmembrane region" description="Helical" evidence="1">
    <location>
        <begin position="72"/>
        <end position="92"/>
    </location>
</feature>
<feature type="transmembrane region" description="Helical" evidence="1">
    <location>
        <begin position="96"/>
        <end position="116"/>
    </location>
</feature>
<feature type="transmembrane region" description="Helical" evidence="1">
    <location>
        <begin position="129"/>
        <end position="149"/>
    </location>
</feature>
<feature type="transmembrane region" description="Helical" evidence="1">
    <location>
        <begin position="169"/>
        <end position="189"/>
    </location>
</feature>
<feature type="transmembrane region" description="Helical" evidence="1">
    <location>
        <begin position="200"/>
        <end position="220"/>
    </location>
</feature>
<feature type="transmembrane region" description="Helical" evidence="1">
    <location>
        <begin position="241"/>
        <end position="261"/>
    </location>
</feature>
<feature type="transmembrane region" description="Helical" evidence="1">
    <location>
        <begin position="266"/>
        <end position="286"/>
    </location>
</feature>
<feature type="transmembrane region" description="Helical" evidence="1">
    <location>
        <begin position="294"/>
        <end position="314"/>
    </location>
</feature>
<feature type="transmembrane region" description="Helical" evidence="1">
    <location>
        <begin position="342"/>
        <end position="362"/>
    </location>
</feature>
<proteinExistence type="inferred from homology"/>
<comment type="function">
    <text evidence="1">Catalyzes the initial step of the lipid cycle reactions in the biosynthesis of the cell wall peptidoglycan: transfers peptidoglycan precursor phospho-MurNAc-pentapeptide from UDP-MurNAc-pentapeptide onto the lipid carrier undecaprenyl phosphate, yielding undecaprenyl-pyrophosphoryl-MurNAc-pentapeptide, known as lipid I.</text>
</comment>
<comment type="catalytic activity">
    <reaction evidence="1">
        <text>UDP-N-acetyl-alpha-D-muramoyl-L-alanyl-gamma-D-glutamyl-meso-2,6-diaminopimeloyl-D-alanyl-D-alanine + di-trans,octa-cis-undecaprenyl phosphate = di-trans,octa-cis-undecaprenyl diphospho-N-acetyl-alpha-D-muramoyl-L-alanyl-D-glutamyl-meso-2,6-diaminopimeloyl-D-alanyl-D-alanine + UMP</text>
        <dbReference type="Rhea" id="RHEA:28386"/>
        <dbReference type="ChEBI" id="CHEBI:57865"/>
        <dbReference type="ChEBI" id="CHEBI:60392"/>
        <dbReference type="ChEBI" id="CHEBI:61386"/>
        <dbReference type="ChEBI" id="CHEBI:61387"/>
        <dbReference type="EC" id="2.7.8.13"/>
    </reaction>
</comment>
<comment type="cofactor">
    <cofactor evidence="1">
        <name>Mg(2+)</name>
        <dbReference type="ChEBI" id="CHEBI:18420"/>
    </cofactor>
</comment>
<comment type="pathway">
    <text evidence="1">Cell wall biogenesis; peptidoglycan biosynthesis.</text>
</comment>
<comment type="subcellular location">
    <subcellularLocation>
        <location evidence="1">Cell inner membrane</location>
        <topology evidence="1">Multi-pass membrane protein</topology>
    </subcellularLocation>
</comment>
<comment type="similarity">
    <text evidence="1">Belongs to the glycosyltransferase 4 family. MraY subfamily.</text>
</comment>
<organism>
    <name type="scientific">Orientia tsutsugamushi (strain Ikeda)</name>
    <name type="common">Rickettsia tsutsugamushi</name>
    <dbReference type="NCBI Taxonomy" id="334380"/>
    <lineage>
        <taxon>Bacteria</taxon>
        <taxon>Pseudomonadati</taxon>
        <taxon>Pseudomonadota</taxon>
        <taxon>Alphaproteobacteria</taxon>
        <taxon>Rickettsiales</taxon>
        <taxon>Rickettsiaceae</taxon>
        <taxon>Rickettsieae</taxon>
        <taxon>Orientia</taxon>
    </lineage>
</organism>
<reference key="1">
    <citation type="journal article" date="2008" name="DNA Res.">
        <title>The whole-genome sequencing of the obligate intracellular bacterium Orientia tsutsugamushi revealed massive gene amplification during reductive genome evolution.</title>
        <authorList>
            <person name="Nakayama K."/>
            <person name="Yamashita A."/>
            <person name="Kurokawa K."/>
            <person name="Morimoto T."/>
            <person name="Ogawa M."/>
            <person name="Fukuhara M."/>
            <person name="Urakami H."/>
            <person name="Ohnishi M."/>
            <person name="Uchiyama I."/>
            <person name="Ogura Y."/>
            <person name="Ooka T."/>
            <person name="Oshima K."/>
            <person name="Tamura A."/>
            <person name="Hattori M."/>
            <person name="Hayashi T."/>
        </authorList>
    </citation>
    <scope>NUCLEOTIDE SEQUENCE [LARGE SCALE GENOMIC DNA]</scope>
    <source>
        <strain>Ikeda</strain>
    </source>
</reference>
<evidence type="ECO:0000255" key="1">
    <source>
        <dbReference type="HAMAP-Rule" id="MF_00038"/>
    </source>
</evidence>
<keyword id="KW-0131">Cell cycle</keyword>
<keyword id="KW-0132">Cell division</keyword>
<keyword id="KW-0997">Cell inner membrane</keyword>
<keyword id="KW-1003">Cell membrane</keyword>
<keyword id="KW-0133">Cell shape</keyword>
<keyword id="KW-0961">Cell wall biogenesis/degradation</keyword>
<keyword id="KW-0460">Magnesium</keyword>
<keyword id="KW-0472">Membrane</keyword>
<keyword id="KW-0479">Metal-binding</keyword>
<keyword id="KW-0573">Peptidoglycan synthesis</keyword>
<keyword id="KW-0808">Transferase</keyword>
<keyword id="KW-0812">Transmembrane</keyword>
<keyword id="KW-1133">Transmembrane helix</keyword>
<sequence>MLYNLLVSHINSCYIFSIFYNVIVRSGIAILLSFSISFSLIPILIKYFKYWKNLAQPIRNLGHKSHIAKAGTPTMGGIAIIFSIIISTLMLADYKNIYVLTTIFGMLSLAILGLIDDYQKVTKKNTKGINATCKLISQIMVSIICCMIVNYNLNSEIANHLIIPFFKKLTIDLSIFYIPFALFIIIGSSNAVNLTDGLDGLVTVPIIIVSFCLGLMCYLADNAQYININHLQILHVQQASELTVLCSAIIGASLGFLWYNIQPAKIFMGDVGSLSLGGAIGIISVISKNEIRLGIIGGLFVIEALSAIIQIYSIRYLGGKRVFKMAPIHHHFEQIGWSESKIVSRFWLLSIIFSLIGLSSLIL</sequence>
<gene>
    <name evidence="1" type="primary">mraY</name>
    <name type="ordered locus">OTT_1872</name>
</gene>
<accession>B3CVD3</accession>
<dbReference type="EC" id="2.7.8.13" evidence="1"/>
<dbReference type="EMBL" id="AP008981">
    <property type="protein sequence ID" value="BAG41330.1"/>
    <property type="molecule type" value="Genomic_DNA"/>
</dbReference>
<dbReference type="RefSeq" id="WP_012462279.1">
    <property type="nucleotide sequence ID" value="NC_010793.1"/>
</dbReference>
<dbReference type="SMR" id="B3CVD3"/>
<dbReference type="KEGG" id="ott:OTT_1872"/>
<dbReference type="HOGENOM" id="CLU_023982_0_0_5"/>
<dbReference type="OrthoDB" id="9805475at2"/>
<dbReference type="UniPathway" id="UPA00219"/>
<dbReference type="Proteomes" id="UP000001033">
    <property type="component" value="Chromosome"/>
</dbReference>
<dbReference type="GO" id="GO:0005886">
    <property type="term" value="C:plasma membrane"/>
    <property type="evidence" value="ECO:0007669"/>
    <property type="project" value="UniProtKB-SubCell"/>
</dbReference>
<dbReference type="GO" id="GO:0046872">
    <property type="term" value="F:metal ion binding"/>
    <property type="evidence" value="ECO:0007669"/>
    <property type="project" value="UniProtKB-KW"/>
</dbReference>
<dbReference type="GO" id="GO:0008963">
    <property type="term" value="F:phospho-N-acetylmuramoyl-pentapeptide-transferase activity"/>
    <property type="evidence" value="ECO:0007669"/>
    <property type="project" value="UniProtKB-UniRule"/>
</dbReference>
<dbReference type="GO" id="GO:0051992">
    <property type="term" value="F:UDP-N-acetylmuramoyl-L-alanyl-D-glutamyl-meso-2,6-diaminopimelyl-D-alanyl-D-alanine:undecaprenyl-phosphate transferase activity"/>
    <property type="evidence" value="ECO:0007669"/>
    <property type="project" value="RHEA"/>
</dbReference>
<dbReference type="GO" id="GO:0051301">
    <property type="term" value="P:cell division"/>
    <property type="evidence" value="ECO:0007669"/>
    <property type="project" value="UniProtKB-KW"/>
</dbReference>
<dbReference type="GO" id="GO:0071555">
    <property type="term" value="P:cell wall organization"/>
    <property type="evidence" value="ECO:0007669"/>
    <property type="project" value="UniProtKB-KW"/>
</dbReference>
<dbReference type="GO" id="GO:0009252">
    <property type="term" value="P:peptidoglycan biosynthetic process"/>
    <property type="evidence" value="ECO:0007669"/>
    <property type="project" value="UniProtKB-UniRule"/>
</dbReference>
<dbReference type="GO" id="GO:0008360">
    <property type="term" value="P:regulation of cell shape"/>
    <property type="evidence" value="ECO:0007669"/>
    <property type="project" value="UniProtKB-KW"/>
</dbReference>
<dbReference type="CDD" id="cd06852">
    <property type="entry name" value="GT_MraY"/>
    <property type="match status" value="1"/>
</dbReference>
<dbReference type="HAMAP" id="MF_00038">
    <property type="entry name" value="MraY"/>
    <property type="match status" value="1"/>
</dbReference>
<dbReference type="InterPro" id="IPR000715">
    <property type="entry name" value="Glycosyl_transferase_4"/>
</dbReference>
<dbReference type="InterPro" id="IPR003524">
    <property type="entry name" value="PNAcMuramoyl-5peptid_Trfase"/>
</dbReference>
<dbReference type="InterPro" id="IPR018480">
    <property type="entry name" value="PNAcMuramoyl-5peptid_Trfase_CS"/>
</dbReference>
<dbReference type="NCBIfam" id="TIGR00445">
    <property type="entry name" value="mraY"/>
    <property type="match status" value="1"/>
</dbReference>
<dbReference type="PANTHER" id="PTHR22926">
    <property type="entry name" value="PHOSPHO-N-ACETYLMURAMOYL-PENTAPEPTIDE-TRANSFERASE"/>
    <property type="match status" value="1"/>
</dbReference>
<dbReference type="PANTHER" id="PTHR22926:SF5">
    <property type="entry name" value="PHOSPHO-N-ACETYLMURAMOYL-PENTAPEPTIDE-TRANSFERASE HOMOLOG"/>
    <property type="match status" value="1"/>
</dbReference>
<dbReference type="Pfam" id="PF00953">
    <property type="entry name" value="Glycos_transf_4"/>
    <property type="match status" value="1"/>
</dbReference>
<dbReference type="Pfam" id="PF10555">
    <property type="entry name" value="MraY_sig1"/>
    <property type="match status" value="1"/>
</dbReference>
<dbReference type="PROSITE" id="PS01347">
    <property type="entry name" value="MRAY_1"/>
    <property type="match status" value="1"/>
</dbReference>
<dbReference type="PROSITE" id="PS01348">
    <property type="entry name" value="MRAY_2"/>
    <property type="match status" value="1"/>
</dbReference>
<protein>
    <recommendedName>
        <fullName evidence="1">Phospho-N-acetylmuramoyl-pentapeptide-transferase</fullName>
        <ecNumber evidence="1">2.7.8.13</ecNumber>
    </recommendedName>
    <alternativeName>
        <fullName evidence="1">UDP-MurNAc-pentapeptide phosphotransferase</fullName>
    </alternativeName>
</protein>
<name>MRAY_ORITI</name>